<protein>
    <recommendedName>
        <fullName evidence="2">Formamidopyrimidine-DNA glycosylase</fullName>
        <shortName evidence="2">Fapy-DNA glycosylase</shortName>
        <ecNumber evidence="2">3.2.2.23</ecNumber>
    </recommendedName>
    <alternativeName>
        <fullName evidence="2">DNA-(apurinic or apyrimidinic site) lyase MutM</fullName>
        <shortName evidence="2">AP lyase MutM</shortName>
        <ecNumber evidence="2">4.2.99.18</ecNumber>
    </alternativeName>
</protein>
<reference key="1">
    <citation type="journal article" date="2007" name="Genome Res.">
        <title>Reductive evolution and niche adaptation inferred from the genome of Mycobacterium ulcerans, the causative agent of Buruli ulcer.</title>
        <authorList>
            <person name="Stinear T.P."/>
            <person name="Seemann T."/>
            <person name="Pidot S."/>
            <person name="Frigui W."/>
            <person name="Reysset G."/>
            <person name="Garnier T."/>
            <person name="Meurice G."/>
            <person name="Simon D."/>
            <person name="Bouchier C."/>
            <person name="Ma L."/>
            <person name="Tichit M."/>
            <person name="Porter J.L."/>
            <person name="Ryan J."/>
            <person name="Johnson P.D.R."/>
            <person name="Davies J.K."/>
            <person name="Jenkin G.A."/>
            <person name="Small P.L.C."/>
            <person name="Jones L.M."/>
            <person name="Tekaia F."/>
            <person name="Laval F."/>
            <person name="Daffe M."/>
            <person name="Parkhill J."/>
            <person name="Cole S.T."/>
        </authorList>
    </citation>
    <scope>NUCLEOTIDE SEQUENCE [LARGE SCALE GENOMIC DNA]</scope>
    <source>
        <strain>Agy99</strain>
    </source>
</reference>
<accession>A0PQ49</accession>
<organism>
    <name type="scientific">Mycobacterium ulcerans (strain Agy99)</name>
    <dbReference type="NCBI Taxonomy" id="362242"/>
    <lineage>
        <taxon>Bacteria</taxon>
        <taxon>Bacillati</taxon>
        <taxon>Actinomycetota</taxon>
        <taxon>Actinomycetes</taxon>
        <taxon>Mycobacteriales</taxon>
        <taxon>Mycobacteriaceae</taxon>
        <taxon>Mycobacterium</taxon>
        <taxon>Mycobacterium ulcerans group</taxon>
    </lineage>
</organism>
<name>FPG_MYCUA</name>
<dbReference type="EC" id="3.2.2.23" evidence="2"/>
<dbReference type="EC" id="4.2.99.18" evidence="2"/>
<dbReference type="EMBL" id="CP000325">
    <property type="protein sequence ID" value="ABL04468.1"/>
    <property type="molecule type" value="Genomic_DNA"/>
</dbReference>
<dbReference type="RefSeq" id="WP_011740086.1">
    <property type="nucleotide sequence ID" value="NC_008611.1"/>
</dbReference>
<dbReference type="SMR" id="A0PQ49"/>
<dbReference type="KEGG" id="mul:MUL_2031"/>
<dbReference type="eggNOG" id="COG0266">
    <property type="taxonomic scope" value="Bacteria"/>
</dbReference>
<dbReference type="HOGENOM" id="CLU_038423_1_2_11"/>
<dbReference type="Proteomes" id="UP000000765">
    <property type="component" value="Chromosome"/>
</dbReference>
<dbReference type="GO" id="GO:0034039">
    <property type="term" value="F:8-oxo-7,8-dihydroguanine DNA N-glycosylase activity"/>
    <property type="evidence" value="ECO:0007669"/>
    <property type="project" value="TreeGrafter"/>
</dbReference>
<dbReference type="GO" id="GO:0140078">
    <property type="term" value="F:class I DNA-(apurinic or apyrimidinic site) endonuclease activity"/>
    <property type="evidence" value="ECO:0007669"/>
    <property type="project" value="UniProtKB-EC"/>
</dbReference>
<dbReference type="GO" id="GO:0003684">
    <property type="term" value="F:damaged DNA binding"/>
    <property type="evidence" value="ECO:0007669"/>
    <property type="project" value="InterPro"/>
</dbReference>
<dbReference type="GO" id="GO:0008270">
    <property type="term" value="F:zinc ion binding"/>
    <property type="evidence" value="ECO:0007669"/>
    <property type="project" value="UniProtKB-UniRule"/>
</dbReference>
<dbReference type="GO" id="GO:0006284">
    <property type="term" value="P:base-excision repair"/>
    <property type="evidence" value="ECO:0007669"/>
    <property type="project" value="InterPro"/>
</dbReference>
<dbReference type="CDD" id="cd08966">
    <property type="entry name" value="EcFpg-like_N"/>
    <property type="match status" value="1"/>
</dbReference>
<dbReference type="FunFam" id="1.10.8.50:FF:000003">
    <property type="entry name" value="Formamidopyrimidine-DNA glycosylase"/>
    <property type="match status" value="1"/>
</dbReference>
<dbReference type="FunFam" id="3.20.190.10:FF:000006">
    <property type="entry name" value="Formamidopyrimidine-DNA glycosylase"/>
    <property type="match status" value="1"/>
</dbReference>
<dbReference type="Gene3D" id="1.10.8.50">
    <property type="match status" value="1"/>
</dbReference>
<dbReference type="Gene3D" id="3.20.190.10">
    <property type="entry name" value="MutM-like, N-terminal"/>
    <property type="match status" value="1"/>
</dbReference>
<dbReference type="HAMAP" id="MF_00103">
    <property type="entry name" value="Fapy_DNA_glycosyl"/>
    <property type="match status" value="1"/>
</dbReference>
<dbReference type="InterPro" id="IPR015886">
    <property type="entry name" value="DNA_glyclase/AP_lyase_DNA-bd"/>
</dbReference>
<dbReference type="InterPro" id="IPR015887">
    <property type="entry name" value="DNA_glyclase_Znf_dom_DNA_BS"/>
</dbReference>
<dbReference type="InterPro" id="IPR020629">
    <property type="entry name" value="Formamido-pyr_DNA_Glyclase"/>
</dbReference>
<dbReference type="InterPro" id="IPR012319">
    <property type="entry name" value="FPG_cat"/>
</dbReference>
<dbReference type="InterPro" id="IPR035937">
    <property type="entry name" value="MutM-like_N-ter"/>
</dbReference>
<dbReference type="InterPro" id="IPR010979">
    <property type="entry name" value="Ribosomal_uS13-like_H2TH"/>
</dbReference>
<dbReference type="InterPro" id="IPR000214">
    <property type="entry name" value="Znf_DNA_glyclase/AP_lyase"/>
</dbReference>
<dbReference type="InterPro" id="IPR010663">
    <property type="entry name" value="Znf_FPG/IleRS"/>
</dbReference>
<dbReference type="NCBIfam" id="TIGR00577">
    <property type="entry name" value="fpg"/>
    <property type="match status" value="1"/>
</dbReference>
<dbReference type="NCBIfam" id="NF002211">
    <property type="entry name" value="PRK01103.1"/>
    <property type="match status" value="1"/>
</dbReference>
<dbReference type="PANTHER" id="PTHR22993">
    <property type="entry name" value="FORMAMIDOPYRIMIDINE-DNA GLYCOSYLASE"/>
    <property type="match status" value="1"/>
</dbReference>
<dbReference type="PANTHER" id="PTHR22993:SF9">
    <property type="entry name" value="FORMAMIDOPYRIMIDINE-DNA GLYCOSYLASE"/>
    <property type="match status" value="1"/>
</dbReference>
<dbReference type="Pfam" id="PF01149">
    <property type="entry name" value="Fapy_DNA_glyco"/>
    <property type="match status" value="1"/>
</dbReference>
<dbReference type="Pfam" id="PF06831">
    <property type="entry name" value="H2TH"/>
    <property type="match status" value="1"/>
</dbReference>
<dbReference type="Pfam" id="PF06827">
    <property type="entry name" value="zf-FPG_IleRS"/>
    <property type="match status" value="1"/>
</dbReference>
<dbReference type="SMART" id="SM00898">
    <property type="entry name" value="Fapy_DNA_glyco"/>
    <property type="match status" value="1"/>
</dbReference>
<dbReference type="SMART" id="SM01232">
    <property type="entry name" value="H2TH"/>
    <property type="match status" value="1"/>
</dbReference>
<dbReference type="SUPFAM" id="SSF57716">
    <property type="entry name" value="Glucocorticoid receptor-like (DNA-binding domain)"/>
    <property type="match status" value="1"/>
</dbReference>
<dbReference type="SUPFAM" id="SSF81624">
    <property type="entry name" value="N-terminal domain of MutM-like DNA repair proteins"/>
    <property type="match status" value="1"/>
</dbReference>
<dbReference type="SUPFAM" id="SSF46946">
    <property type="entry name" value="S13-like H2TH domain"/>
    <property type="match status" value="1"/>
</dbReference>
<dbReference type="PROSITE" id="PS51068">
    <property type="entry name" value="FPG_CAT"/>
    <property type="match status" value="1"/>
</dbReference>
<dbReference type="PROSITE" id="PS01242">
    <property type="entry name" value="ZF_FPG_1"/>
    <property type="match status" value="1"/>
</dbReference>
<dbReference type="PROSITE" id="PS51066">
    <property type="entry name" value="ZF_FPG_2"/>
    <property type="match status" value="1"/>
</dbReference>
<gene>
    <name evidence="2" type="primary">mutM</name>
    <name evidence="2" type="synonym">fpg</name>
    <name type="ordered locus">MUL_2031</name>
</gene>
<feature type="initiator methionine" description="Removed" evidence="1">
    <location>
        <position position="1"/>
    </location>
</feature>
<feature type="chain" id="PRO_1000008724" description="Formamidopyrimidine-DNA glycosylase">
    <location>
        <begin position="2"/>
        <end position="292"/>
    </location>
</feature>
<feature type="zinc finger region" description="FPG-type" evidence="2">
    <location>
        <begin position="254"/>
        <end position="288"/>
    </location>
</feature>
<feature type="active site" description="Schiff-base intermediate with DNA" evidence="2">
    <location>
        <position position="2"/>
    </location>
</feature>
<feature type="active site" description="Proton donor" evidence="2">
    <location>
        <position position="3"/>
    </location>
</feature>
<feature type="active site" description="Proton donor; for beta-elimination activity" evidence="2">
    <location>
        <position position="61"/>
    </location>
</feature>
<feature type="active site" description="Proton donor; for delta-elimination activity" evidence="2">
    <location>
        <position position="278"/>
    </location>
</feature>
<feature type="binding site" evidence="2">
    <location>
        <position position="103"/>
    </location>
    <ligand>
        <name>DNA</name>
        <dbReference type="ChEBI" id="CHEBI:16991"/>
    </ligand>
</feature>
<feature type="binding site" evidence="2">
    <location>
        <position position="122"/>
    </location>
    <ligand>
        <name>DNA</name>
        <dbReference type="ChEBI" id="CHEBI:16991"/>
    </ligand>
</feature>
<feature type="binding site" evidence="2">
    <location>
        <position position="168"/>
    </location>
    <ligand>
        <name>DNA</name>
        <dbReference type="ChEBI" id="CHEBI:16991"/>
    </ligand>
</feature>
<proteinExistence type="inferred from homology"/>
<keyword id="KW-0227">DNA damage</keyword>
<keyword id="KW-0234">DNA repair</keyword>
<keyword id="KW-0238">DNA-binding</keyword>
<keyword id="KW-0326">Glycosidase</keyword>
<keyword id="KW-0378">Hydrolase</keyword>
<keyword id="KW-0456">Lyase</keyword>
<keyword id="KW-0479">Metal-binding</keyword>
<keyword id="KW-0511">Multifunctional enzyme</keyword>
<keyword id="KW-0862">Zinc</keyword>
<keyword id="KW-0863">Zinc-finger</keyword>
<evidence type="ECO:0000250" key="1"/>
<evidence type="ECO:0000255" key="2">
    <source>
        <dbReference type="HAMAP-Rule" id="MF_00103"/>
    </source>
</evidence>
<sequence length="292" mass="32001">MPELPEVEVVRRGLQDHVVGKTMTAVRVHHPRAVRRHEAGPADLTARLLGARISGTDRRGKYLWLTLDAGAPTTGRDDPDAALVVHLGMSGQMLLGGVPRAEHVRISAVLDDGTVLSFADQRTFGGWQLADLVSVDGSVVPAPVAHLARDPLDPLFDVDSVIKVLRGKHSEVKRRLLDQQVVSGIGNIYADEALWRAKVHGARVAATLTRRQLGAVLDAAADVMREALAKGGTSFDSLYVNVNGQSGYFDRSLDAYGREGEHCRRCGAVMRREKFMNRSSFYCPRCQPRPRR</sequence>
<comment type="function">
    <text evidence="2">Involved in base excision repair of DNA damaged by oxidation or by mutagenic agents. Acts as a DNA glycosylase that recognizes and removes damaged bases. Has a preference for oxidized purines, such as 7,8-dihydro-8-oxoguanine (8-oxoG). Has AP (apurinic/apyrimidinic) lyase activity and introduces nicks in the DNA strand. Cleaves the DNA backbone by beta-delta elimination to generate a single-strand break at the site of the removed base with both 3'- and 5'-phosphates.</text>
</comment>
<comment type="catalytic activity">
    <reaction evidence="2">
        <text>Hydrolysis of DNA containing ring-opened 7-methylguanine residues, releasing 2,6-diamino-4-hydroxy-5-(N-methyl)formamidopyrimidine.</text>
        <dbReference type="EC" id="3.2.2.23"/>
    </reaction>
</comment>
<comment type="catalytic activity">
    <reaction evidence="2">
        <text>2'-deoxyribonucleotide-(2'-deoxyribose 5'-phosphate)-2'-deoxyribonucleotide-DNA = a 3'-end 2'-deoxyribonucleotide-(2,3-dehydro-2,3-deoxyribose 5'-phosphate)-DNA + a 5'-end 5'-phospho-2'-deoxyribonucleoside-DNA + H(+)</text>
        <dbReference type="Rhea" id="RHEA:66592"/>
        <dbReference type="Rhea" id="RHEA-COMP:13180"/>
        <dbReference type="Rhea" id="RHEA-COMP:16897"/>
        <dbReference type="Rhea" id="RHEA-COMP:17067"/>
        <dbReference type="ChEBI" id="CHEBI:15378"/>
        <dbReference type="ChEBI" id="CHEBI:136412"/>
        <dbReference type="ChEBI" id="CHEBI:157695"/>
        <dbReference type="ChEBI" id="CHEBI:167181"/>
        <dbReference type="EC" id="4.2.99.18"/>
    </reaction>
</comment>
<comment type="cofactor">
    <cofactor evidence="2">
        <name>Zn(2+)</name>
        <dbReference type="ChEBI" id="CHEBI:29105"/>
    </cofactor>
    <text evidence="2">Binds 1 zinc ion per subunit.</text>
</comment>
<comment type="subunit">
    <text evidence="2">Monomer.</text>
</comment>
<comment type="similarity">
    <text evidence="2">Belongs to the FPG family.</text>
</comment>